<proteinExistence type="inferred from homology"/>
<reference key="1">
    <citation type="journal article" date="2006" name="J. Bacteriol.">
        <title>Complete genome sequence of the dehalorespiring bacterium Desulfitobacterium hafniense Y51 and comparison with Dehalococcoides ethenogenes 195.</title>
        <authorList>
            <person name="Nonaka H."/>
            <person name="Keresztes G."/>
            <person name="Shinoda Y."/>
            <person name="Ikenaga Y."/>
            <person name="Abe M."/>
            <person name="Naito K."/>
            <person name="Inatomi K."/>
            <person name="Furukawa K."/>
            <person name="Inui M."/>
            <person name="Yukawa H."/>
        </authorList>
    </citation>
    <scope>NUCLEOTIDE SEQUENCE [LARGE SCALE GENOMIC DNA]</scope>
    <source>
        <strain>Y51</strain>
    </source>
</reference>
<protein>
    <recommendedName>
        <fullName evidence="1">Trigger factor 2</fullName>
        <shortName evidence="1">TF 2</shortName>
        <ecNumber evidence="1">5.2.1.8</ecNumber>
    </recommendedName>
    <alternativeName>
        <fullName evidence="1">PPIase</fullName>
    </alternativeName>
</protein>
<keyword id="KW-0131">Cell cycle</keyword>
<keyword id="KW-0132">Cell division</keyword>
<keyword id="KW-0143">Chaperone</keyword>
<keyword id="KW-0963">Cytoplasm</keyword>
<keyword id="KW-0413">Isomerase</keyword>
<keyword id="KW-1185">Reference proteome</keyword>
<keyword id="KW-0697">Rotamase</keyword>
<evidence type="ECO:0000255" key="1">
    <source>
        <dbReference type="HAMAP-Rule" id="MF_00303"/>
    </source>
</evidence>
<name>TIG2_DESHY</name>
<gene>
    <name evidence="1" type="primary">tig2</name>
    <name type="ordered locus">DSY3514</name>
</gene>
<accession>Q24RN9</accession>
<comment type="function">
    <text evidence="1">Involved in protein export. Acts as a chaperone by maintaining the newly synthesized protein in an open conformation. Functions as a peptidyl-prolyl cis-trans isomerase.</text>
</comment>
<comment type="catalytic activity">
    <reaction evidence="1">
        <text>[protein]-peptidylproline (omega=180) = [protein]-peptidylproline (omega=0)</text>
        <dbReference type="Rhea" id="RHEA:16237"/>
        <dbReference type="Rhea" id="RHEA-COMP:10747"/>
        <dbReference type="Rhea" id="RHEA-COMP:10748"/>
        <dbReference type="ChEBI" id="CHEBI:83833"/>
        <dbReference type="ChEBI" id="CHEBI:83834"/>
        <dbReference type="EC" id="5.2.1.8"/>
    </reaction>
</comment>
<comment type="subcellular location">
    <subcellularLocation>
        <location>Cytoplasm</location>
    </subcellularLocation>
    <text evidence="1">About half TF is bound to the ribosome near the polypeptide exit tunnel while the other half is free in the cytoplasm.</text>
</comment>
<comment type="domain">
    <text evidence="1">Consists of 3 domains; the N-terminus binds the ribosome, the middle domain has PPIase activity, while the C-terminus has intrinsic chaperone activity on its own.</text>
</comment>
<comment type="similarity">
    <text evidence="1">Belongs to the FKBP-type PPIase family. Tig subfamily.</text>
</comment>
<organism>
    <name type="scientific">Desulfitobacterium hafniense (strain Y51)</name>
    <dbReference type="NCBI Taxonomy" id="138119"/>
    <lineage>
        <taxon>Bacteria</taxon>
        <taxon>Bacillati</taxon>
        <taxon>Bacillota</taxon>
        <taxon>Clostridia</taxon>
        <taxon>Eubacteriales</taxon>
        <taxon>Desulfitobacteriaceae</taxon>
        <taxon>Desulfitobacterium</taxon>
    </lineage>
</organism>
<dbReference type="EC" id="5.2.1.8" evidence="1"/>
<dbReference type="EMBL" id="AP008230">
    <property type="protein sequence ID" value="BAE85303.1"/>
    <property type="molecule type" value="Genomic_DNA"/>
</dbReference>
<dbReference type="SMR" id="Q24RN9"/>
<dbReference type="STRING" id="138119.DSY3514"/>
<dbReference type="KEGG" id="dsy:DSY3514"/>
<dbReference type="eggNOG" id="COG0544">
    <property type="taxonomic scope" value="Bacteria"/>
</dbReference>
<dbReference type="HOGENOM" id="CLU_033058_3_2_9"/>
<dbReference type="Proteomes" id="UP000001946">
    <property type="component" value="Chromosome"/>
</dbReference>
<dbReference type="GO" id="GO:0005737">
    <property type="term" value="C:cytoplasm"/>
    <property type="evidence" value="ECO:0007669"/>
    <property type="project" value="UniProtKB-SubCell"/>
</dbReference>
<dbReference type="GO" id="GO:0003755">
    <property type="term" value="F:peptidyl-prolyl cis-trans isomerase activity"/>
    <property type="evidence" value="ECO:0007669"/>
    <property type="project" value="UniProtKB-UniRule"/>
</dbReference>
<dbReference type="GO" id="GO:0044183">
    <property type="term" value="F:protein folding chaperone"/>
    <property type="evidence" value="ECO:0007669"/>
    <property type="project" value="TreeGrafter"/>
</dbReference>
<dbReference type="GO" id="GO:0043022">
    <property type="term" value="F:ribosome binding"/>
    <property type="evidence" value="ECO:0007669"/>
    <property type="project" value="TreeGrafter"/>
</dbReference>
<dbReference type="GO" id="GO:0051083">
    <property type="term" value="P:'de novo' cotranslational protein folding"/>
    <property type="evidence" value="ECO:0007669"/>
    <property type="project" value="TreeGrafter"/>
</dbReference>
<dbReference type="GO" id="GO:0051301">
    <property type="term" value="P:cell division"/>
    <property type="evidence" value="ECO:0007669"/>
    <property type="project" value="UniProtKB-KW"/>
</dbReference>
<dbReference type="GO" id="GO:0061077">
    <property type="term" value="P:chaperone-mediated protein folding"/>
    <property type="evidence" value="ECO:0007669"/>
    <property type="project" value="TreeGrafter"/>
</dbReference>
<dbReference type="GO" id="GO:0015031">
    <property type="term" value="P:protein transport"/>
    <property type="evidence" value="ECO:0007669"/>
    <property type="project" value="UniProtKB-UniRule"/>
</dbReference>
<dbReference type="GO" id="GO:0043335">
    <property type="term" value="P:protein unfolding"/>
    <property type="evidence" value="ECO:0007669"/>
    <property type="project" value="TreeGrafter"/>
</dbReference>
<dbReference type="Gene3D" id="3.10.50.40">
    <property type="match status" value="1"/>
</dbReference>
<dbReference type="Gene3D" id="3.30.70.1050">
    <property type="entry name" value="Trigger factor ribosome-binding domain"/>
    <property type="match status" value="1"/>
</dbReference>
<dbReference type="Gene3D" id="1.10.3120.10">
    <property type="entry name" value="Trigger factor, C-terminal domain"/>
    <property type="match status" value="1"/>
</dbReference>
<dbReference type="HAMAP" id="MF_00303">
    <property type="entry name" value="Trigger_factor_Tig"/>
    <property type="match status" value="1"/>
</dbReference>
<dbReference type="InterPro" id="IPR046357">
    <property type="entry name" value="PPIase_dom_sf"/>
</dbReference>
<dbReference type="InterPro" id="IPR005215">
    <property type="entry name" value="Trig_fac"/>
</dbReference>
<dbReference type="InterPro" id="IPR008880">
    <property type="entry name" value="Trigger_fac_C"/>
</dbReference>
<dbReference type="InterPro" id="IPR037041">
    <property type="entry name" value="Trigger_fac_C_sf"/>
</dbReference>
<dbReference type="InterPro" id="IPR008881">
    <property type="entry name" value="Trigger_fac_ribosome-bd_bac"/>
</dbReference>
<dbReference type="InterPro" id="IPR036611">
    <property type="entry name" value="Trigger_fac_ribosome-bd_sf"/>
</dbReference>
<dbReference type="InterPro" id="IPR027304">
    <property type="entry name" value="Trigger_fact/SurA_dom_sf"/>
</dbReference>
<dbReference type="NCBIfam" id="TIGR00115">
    <property type="entry name" value="tig"/>
    <property type="match status" value="1"/>
</dbReference>
<dbReference type="PANTHER" id="PTHR30560">
    <property type="entry name" value="TRIGGER FACTOR CHAPERONE AND PEPTIDYL-PROLYL CIS/TRANS ISOMERASE"/>
    <property type="match status" value="1"/>
</dbReference>
<dbReference type="PANTHER" id="PTHR30560:SF3">
    <property type="entry name" value="TRIGGER FACTOR-LIKE PROTEIN TIG, CHLOROPLASTIC"/>
    <property type="match status" value="1"/>
</dbReference>
<dbReference type="Pfam" id="PF05698">
    <property type="entry name" value="Trigger_C"/>
    <property type="match status" value="1"/>
</dbReference>
<dbReference type="Pfam" id="PF05697">
    <property type="entry name" value="Trigger_N"/>
    <property type="match status" value="1"/>
</dbReference>
<dbReference type="PIRSF" id="PIRSF003095">
    <property type="entry name" value="Trigger_factor"/>
    <property type="match status" value="1"/>
</dbReference>
<dbReference type="SUPFAM" id="SSF54534">
    <property type="entry name" value="FKBP-like"/>
    <property type="match status" value="1"/>
</dbReference>
<dbReference type="SUPFAM" id="SSF109998">
    <property type="entry name" value="Triger factor/SurA peptide-binding domain-like"/>
    <property type="match status" value="1"/>
</dbReference>
<dbReference type="SUPFAM" id="SSF102735">
    <property type="entry name" value="Trigger factor ribosome-binding domain"/>
    <property type="match status" value="1"/>
</dbReference>
<feature type="chain" id="PRO_0000256554" description="Trigger factor 2">
    <location>
        <begin position="1"/>
        <end position="434"/>
    </location>
</feature>
<feature type="domain" description="PPIase FKBP-type" evidence="1">
    <location>
        <begin position="164"/>
        <end position="247"/>
    </location>
</feature>
<sequence length="434" mass="49075">MNAVLENIENSEARFRFTIDYKVFADALEKTYRKNKKNYQVAGFRKGNVPRSVIESQYGPTVFYQEALDLIMTEEYKKAVESLALNTIGDPDIEVGEIEKGQELSVKASVPVVPEVTLGQLEGIEVVMPKAREVKERDIDKVLEELQYKNKKITDKEIAPAEKGDTVTVDYDCELDGTKFEPVVDYKALLDDSSDTMGFEGQLEGAQKGDILDIKKVLPHDHPQPQIAGKTACFKVTVKKVERIEILPLDDAFAQKVGNVSTMEEFRAEIKKNLEQAAAQRVQMQRNNAILSELFKRCQVKIPESLIMQRAMSMLEQFSGQLEAEGGTLDLYLQLINKKSGDFKREVWEDAENSLKADYILDKIIKEKGYTVSEEELNQGCEKFALSINMSPENARQKLGPLVHKVEHDLKAEKAFQYLLEHAVIREDNGDKTA</sequence>